<evidence type="ECO:0000255" key="1">
    <source>
        <dbReference type="HAMAP-Rule" id="MF_00170"/>
    </source>
</evidence>
<gene>
    <name evidence="1" type="primary">rpiA</name>
    <name type="ordered locus">Rfer_2206</name>
</gene>
<comment type="function">
    <text evidence="1">Catalyzes the reversible conversion of ribose-5-phosphate to ribulose 5-phosphate.</text>
</comment>
<comment type="catalytic activity">
    <reaction evidence="1">
        <text>aldehydo-D-ribose 5-phosphate = D-ribulose 5-phosphate</text>
        <dbReference type="Rhea" id="RHEA:14657"/>
        <dbReference type="ChEBI" id="CHEBI:58121"/>
        <dbReference type="ChEBI" id="CHEBI:58273"/>
        <dbReference type="EC" id="5.3.1.6"/>
    </reaction>
</comment>
<comment type="pathway">
    <text evidence="1">Carbohydrate degradation; pentose phosphate pathway; D-ribose 5-phosphate from D-ribulose 5-phosphate (non-oxidative stage): step 1/1.</text>
</comment>
<comment type="subunit">
    <text evidence="1">Homodimer.</text>
</comment>
<comment type="similarity">
    <text evidence="1">Belongs to the ribose 5-phosphate isomerase family.</text>
</comment>
<proteinExistence type="inferred from homology"/>
<sequence length="234" mass="24483">MTNPISQAAGALSQDELKTLVGQAALQYVAPGEIVGVGTGSTVNKFIDALASIRHLIKGAVSSSEASTLRLKALGIPVFDANEVAELSVYIDGADEIDGHGNMIKGGGAALTREKIVAALANQFVCIADESKLVQTLGRYPLPVEIIPMAAQRITQQFAALGGRAQVRLKGDQPLVTDNGQILLDVTGLQISDPLAFETLVSQWPGVVTVGVFAYQKAQVCLLGTARGVKTLTF</sequence>
<reference key="1">
    <citation type="submission" date="2006-02" db="EMBL/GenBank/DDBJ databases">
        <title>Complete sequence of chromosome of Rhodoferax ferrireducens DSM 15236.</title>
        <authorList>
            <person name="Copeland A."/>
            <person name="Lucas S."/>
            <person name="Lapidus A."/>
            <person name="Barry K."/>
            <person name="Detter J.C."/>
            <person name="Glavina del Rio T."/>
            <person name="Hammon N."/>
            <person name="Israni S."/>
            <person name="Pitluck S."/>
            <person name="Brettin T."/>
            <person name="Bruce D."/>
            <person name="Han C."/>
            <person name="Tapia R."/>
            <person name="Gilna P."/>
            <person name="Kiss H."/>
            <person name="Schmutz J."/>
            <person name="Larimer F."/>
            <person name="Land M."/>
            <person name="Kyrpides N."/>
            <person name="Ivanova N."/>
            <person name="Richardson P."/>
        </authorList>
    </citation>
    <scope>NUCLEOTIDE SEQUENCE [LARGE SCALE GENOMIC DNA]</scope>
    <source>
        <strain>ATCC BAA-621 / DSM 15236 / T118</strain>
    </source>
</reference>
<organism>
    <name type="scientific">Albidiferax ferrireducens (strain ATCC BAA-621 / DSM 15236 / T118)</name>
    <name type="common">Rhodoferax ferrireducens</name>
    <dbReference type="NCBI Taxonomy" id="338969"/>
    <lineage>
        <taxon>Bacteria</taxon>
        <taxon>Pseudomonadati</taxon>
        <taxon>Pseudomonadota</taxon>
        <taxon>Betaproteobacteria</taxon>
        <taxon>Burkholderiales</taxon>
        <taxon>Comamonadaceae</taxon>
        <taxon>Rhodoferax</taxon>
    </lineage>
</organism>
<feature type="chain" id="PRO_1000097688" description="Ribose-5-phosphate isomerase A">
    <location>
        <begin position="1"/>
        <end position="234"/>
    </location>
</feature>
<feature type="active site" description="Proton acceptor" evidence="1">
    <location>
        <position position="114"/>
    </location>
</feature>
<feature type="binding site" evidence="1">
    <location>
        <begin position="39"/>
        <end position="42"/>
    </location>
    <ligand>
        <name>substrate</name>
    </ligand>
</feature>
<feature type="binding site" evidence="1">
    <location>
        <begin position="92"/>
        <end position="95"/>
    </location>
    <ligand>
        <name>substrate</name>
    </ligand>
</feature>
<feature type="binding site" evidence="1">
    <location>
        <begin position="105"/>
        <end position="108"/>
    </location>
    <ligand>
        <name>substrate</name>
    </ligand>
</feature>
<feature type="binding site" evidence="1">
    <location>
        <position position="132"/>
    </location>
    <ligand>
        <name>substrate</name>
    </ligand>
</feature>
<protein>
    <recommendedName>
        <fullName evidence="1">Ribose-5-phosphate isomerase A</fullName>
        <ecNumber evidence="1">5.3.1.6</ecNumber>
    </recommendedName>
    <alternativeName>
        <fullName evidence="1">Phosphoriboisomerase A</fullName>
        <shortName evidence="1">PRI</shortName>
    </alternativeName>
</protein>
<accession>Q21WC3</accession>
<dbReference type="EC" id="5.3.1.6" evidence="1"/>
<dbReference type="EMBL" id="CP000267">
    <property type="protein sequence ID" value="ABD69930.1"/>
    <property type="molecule type" value="Genomic_DNA"/>
</dbReference>
<dbReference type="RefSeq" id="WP_011464498.1">
    <property type="nucleotide sequence ID" value="NC_007908.1"/>
</dbReference>
<dbReference type="SMR" id="Q21WC3"/>
<dbReference type="STRING" id="338969.Rfer_2206"/>
<dbReference type="KEGG" id="rfr:Rfer_2206"/>
<dbReference type="eggNOG" id="COG0120">
    <property type="taxonomic scope" value="Bacteria"/>
</dbReference>
<dbReference type="HOGENOM" id="CLU_056590_1_1_4"/>
<dbReference type="OrthoDB" id="5870696at2"/>
<dbReference type="UniPathway" id="UPA00115">
    <property type="reaction ID" value="UER00412"/>
</dbReference>
<dbReference type="Proteomes" id="UP000008332">
    <property type="component" value="Chromosome"/>
</dbReference>
<dbReference type="GO" id="GO:0005829">
    <property type="term" value="C:cytosol"/>
    <property type="evidence" value="ECO:0007669"/>
    <property type="project" value="TreeGrafter"/>
</dbReference>
<dbReference type="GO" id="GO:0004751">
    <property type="term" value="F:ribose-5-phosphate isomerase activity"/>
    <property type="evidence" value="ECO:0007669"/>
    <property type="project" value="UniProtKB-UniRule"/>
</dbReference>
<dbReference type="GO" id="GO:0006014">
    <property type="term" value="P:D-ribose metabolic process"/>
    <property type="evidence" value="ECO:0007669"/>
    <property type="project" value="TreeGrafter"/>
</dbReference>
<dbReference type="GO" id="GO:0009052">
    <property type="term" value="P:pentose-phosphate shunt, non-oxidative branch"/>
    <property type="evidence" value="ECO:0007669"/>
    <property type="project" value="UniProtKB-UniRule"/>
</dbReference>
<dbReference type="CDD" id="cd01398">
    <property type="entry name" value="RPI_A"/>
    <property type="match status" value="1"/>
</dbReference>
<dbReference type="FunFam" id="3.40.50.1360:FF:000001">
    <property type="entry name" value="Ribose-5-phosphate isomerase A"/>
    <property type="match status" value="1"/>
</dbReference>
<dbReference type="Gene3D" id="3.30.70.260">
    <property type="match status" value="1"/>
</dbReference>
<dbReference type="Gene3D" id="3.40.50.1360">
    <property type="match status" value="1"/>
</dbReference>
<dbReference type="HAMAP" id="MF_00170">
    <property type="entry name" value="Rib_5P_isom_A"/>
    <property type="match status" value="1"/>
</dbReference>
<dbReference type="InterPro" id="IPR037171">
    <property type="entry name" value="NagB/RpiA_transferase-like"/>
</dbReference>
<dbReference type="InterPro" id="IPR020672">
    <property type="entry name" value="Ribose5P_isomerase_typA_subgr"/>
</dbReference>
<dbReference type="InterPro" id="IPR004788">
    <property type="entry name" value="Ribose5P_isomerase_type_A"/>
</dbReference>
<dbReference type="NCBIfam" id="NF001924">
    <property type="entry name" value="PRK00702.1"/>
    <property type="match status" value="1"/>
</dbReference>
<dbReference type="NCBIfam" id="TIGR00021">
    <property type="entry name" value="rpiA"/>
    <property type="match status" value="1"/>
</dbReference>
<dbReference type="PANTHER" id="PTHR11934">
    <property type="entry name" value="RIBOSE-5-PHOSPHATE ISOMERASE"/>
    <property type="match status" value="1"/>
</dbReference>
<dbReference type="PANTHER" id="PTHR11934:SF0">
    <property type="entry name" value="RIBOSE-5-PHOSPHATE ISOMERASE"/>
    <property type="match status" value="1"/>
</dbReference>
<dbReference type="Pfam" id="PF06026">
    <property type="entry name" value="Rib_5-P_isom_A"/>
    <property type="match status" value="1"/>
</dbReference>
<dbReference type="SUPFAM" id="SSF75445">
    <property type="entry name" value="D-ribose-5-phosphate isomerase (RpiA), lid domain"/>
    <property type="match status" value="1"/>
</dbReference>
<dbReference type="SUPFAM" id="SSF100950">
    <property type="entry name" value="NagB/RpiA/CoA transferase-like"/>
    <property type="match status" value="1"/>
</dbReference>
<name>RPIA_ALBFT</name>
<keyword id="KW-0413">Isomerase</keyword>
<keyword id="KW-1185">Reference proteome</keyword>